<accession>Q9R097</accession>
<accession>Q99J04</accession>
<proteinExistence type="evidence at protein level"/>
<gene>
    <name type="primary">Spint1</name>
    <name type="synonym">Hai1</name>
</gene>
<feature type="signal peptide" evidence="3">
    <location>
        <begin position="1"/>
        <end position="29"/>
    </location>
</feature>
<feature type="chain" id="PRO_0000016884" description="Kunitz-type protease inhibitor 1">
    <location>
        <begin position="30"/>
        <end position="507"/>
    </location>
</feature>
<feature type="domain" description="MANSC" evidence="6">
    <location>
        <begin position="51"/>
        <end position="134"/>
    </location>
</feature>
<feature type="domain" description="BPTI/Kunitz inhibitor 1" evidence="4">
    <location>
        <begin position="244"/>
        <end position="294"/>
    </location>
</feature>
<feature type="domain" description="LDL-receptor class A" evidence="5">
    <location>
        <begin position="312"/>
        <end position="348"/>
    </location>
</feature>
<feature type="domain" description="BPTI/Kunitz inhibitor 2" evidence="4">
    <location>
        <begin position="369"/>
        <end position="419"/>
    </location>
</feature>
<feature type="site" description="Reactive bond" evidence="1">
    <location>
        <begin position="254"/>
        <end position="255"/>
    </location>
</feature>
<feature type="site" description="Reactive bond" evidence="1">
    <location>
        <begin position="379"/>
        <end position="380"/>
    </location>
</feature>
<feature type="glycosylation site" description="N-linked (GlcNAc...) asparagine" evidence="7">
    <location>
        <position position="229"/>
    </location>
</feature>
<feature type="glycosylation site" description="N-linked (GlcNAc...) asparagine" evidence="3">
    <location>
        <position position="501"/>
    </location>
</feature>
<feature type="disulfide bond" evidence="1">
    <location>
        <begin position="244"/>
        <end position="294"/>
    </location>
</feature>
<feature type="disulfide bond" evidence="1">
    <location>
        <begin position="253"/>
        <end position="277"/>
    </location>
</feature>
<feature type="disulfide bond" evidence="1">
    <location>
        <begin position="269"/>
        <end position="290"/>
    </location>
</feature>
<feature type="disulfide bond" evidence="1">
    <location>
        <begin position="320"/>
        <end position="338"/>
    </location>
</feature>
<feature type="disulfide bond" evidence="1">
    <location>
        <begin position="332"/>
        <end position="347"/>
    </location>
</feature>
<feature type="disulfide bond" evidence="1">
    <location>
        <begin position="369"/>
        <end position="419"/>
    </location>
</feature>
<feature type="disulfide bond" evidence="1">
    <location>
        <begin position="378"/>
        <end position="402"/>
    </location>
</feature>
<feature type="disulfide bond" evidence="1">
    <location>
        <begin position="394"/>
        <end position="415"/>
    </location>
</feature>
<feature type="sequence conflict" description="In Ref. 1; AAF02490." evidence="8" ref="1">
    <original>G</original>
    <variation>R</variation>
    <location>
        <position position="102"/>
    </location>
</feature>
<feature type="sequence conflict" description="In Ref. 1; AAF02490." evidence="8" ref="1">
    <original>K</original>
    <variation>M</variation>
    <location>
        <position position="238"/>
    </location>
</feature>
<feature type="sequence conflict" description="In Ref. 1; AAF02490." evidence="8" ref="1">
    <original>C</original>
    <variation>S</variation>
    <location>
        <position position="325"/>
    </location>
</feature>
<name>SPIT1_MOUSE</name>
<sequence>MAGRRLARASISAVGVWLLCALGLQATEAELPSAPAELPGGAACLSRFTSGVPSFVLDTEASVSNGATFLGSPTARRGWDCVRSCCTTQNCNLALVELQPDGGEDAISACFLMNCLYEQNFVCKFAPKEGFINYLTQELYRSYRELRTRGFGGSRIPRIWMGIDLKVQLQKPLVLNEADNTDWHLLQGDSDVRVERKRPEEVELWGLKEGTYLFQLTRTDSDQPEETANLTITVLTAKQTEDYCLASYKVGRCRGSFPRWYYDPKEQICKSFTFGGCLGNKNNYLREEECMLACKDVQGISPKRHHPVCSGSCHATQFRCSNGCCIDGFLECDDTPDCPDGSDEATCEKYTSGFDELQNIHFLSDKGYCAELPDTGFCKENIPRWYYNPFSERCARFTYGGCYGNKNNFEEEQQCLESCRGISKKDVFGLRREGSIPTVGSAEVAIAVFLVICIIVVLTILGYCFFKNQRKEFHSPLHHPPPTPASSTVSTTEDTEHLVYNHTTQPL</sequence>
<evidence type="ECO:0000250" key="1"/>
<evidence type="ECO:0000250" key="2">
    <source>
        <dbReference type="UniProtKB" id="O43278"/>
    </source>
</evidence>
<evidence type="ECO:0000255" key="3"/>
<evidence type="ECO:0000255" key="4">
    <source>
        <dbReference type="PROSITE-ProRule" id="PRU00031"/>
    </source>
</evidence>
<evidence type="ECO:0000255" key="5">
    <source>
        <dbReference type="PROSITE-ProRule" id="PRU00124"/>
    </source>
</evidence>
<evidence type="ECO:0000255" key="6">
    <source>
        <dbReference type="PROSITE-ProRule" id="PRU00341"/>
    </source>
</evidence>
<evidence type="ECO:0000269" key="7">
    <source>
    </source>
</evidence>
<evidence type="ECO:0000305" key="8"/>
<protein>
    <recommendedName>
        <fullName>Kunitz-type protease inhibitor 1</fullName>
    </recommendedName>
    <alternativeName>
        <fullName>Hepatocyte growth factor activator inhibitor type 1</fullName>
        <shortName>HAI-1</shortName>
    </alternativeName>
</protein>
<keyword id="KW-1003">Cell membrane</keyword>
<keyword id="KW-0963">Cytoplasm</keyword>
<keyword id="KW-1015">Disulfide bond</keyword>
<keyword id="KW-0325">Glycoprotein</keyword>
<keyword id="KW-0472">Membrane</keyword>
<keyword id="KW-0646">Protease inhibitor</keyword>
<keyword id="KW-1185">Reference proteome</keyword>
<keyword id="KW-0677">Repeat</keyword>
<keyword id="KW-0964">Secreted</keyword>
<keyword id="KW-0722">Serine protease inhibitor</keyword>
<keyword id="KW-0732">Signal</keyword>
<comment type="function">
    <text evidence="2">Inhibitor of HGFAC (By similarity). Inhibits serine protease activity of ST14/matriptase in vitro (By similarity). Inhibits serine protease activity of TMPRSS13, via the BPTI/Kunitz inhibitor 1 domain (By similarity).</text>
</comment>
<comment type="subunit">
    <text evidence="2">Interacts with HGFAC (By similarity). Interacts with TMPRSS13; the interaction promotes the phosphorylation and cell membrane localization of TMPRSS13 (By similarity).</text>
</comment>
<comment type="subcellular location">
    <subcellularLocation>
        <location evidence="2">Secreted</location>
    </subcellularLocation>
    <subcellularLocation>
        <location evidence="2">Cytoplasm</location>
    </subcellularLocation>
    <subcellularLocation>
        <location evidence="2">Cell membrane</location>
    </subcellularLocation>
</comment>
<comment type="domain">
    <text>This inhibitor contains two inhibitory domains.</text>
</comment>
<dbReference type="EMBL" id="AF099018">
    <property type="protein sequence ID" value="AAF02490.1"/>
    <property type="molecule type" value="mRNA"/>
</dbReference>
<dbReference type="EMBL" id="AL929318">
    <property type="status" value="NOT_ANNOTATED_CDS"/>
    <property type="molecule type" value="Genomic_DNA"/>
</dbReference>
<dbReference type="EMBL" id="CH466519">
    <property type="protein sequence ID" value="EDL27946.1"/>
    <property type="molecule type" value="Genomic_DNA"/>
</dbReference>
<dbReference type="EMBL" id="BC005769">
    <property type="protein sequence ID" value="AAH05769.1"/>
    <property type="molecule type" value="mRNA"/>
</dbReference>
<dbReference type="CCDS" id="CCDS16597.1"/>
<dbReference type="RefSeq" id="NP_001399589.1">
    <property type="nucleotide sequence ID" value="NM_001412660.1"/>
</dbReference>
<dbReference type="RefSeq" id="NP_001399590.1">
    <property type="nucleotide sequence ID" value="NM_001412661.1"/>
</dbReference>
<dbReference type="RefSeq" id="NP_058603.2">
    <property type="nucleotide sequence ID" value="NM_016907.3"/>
</dbReference>
<dbReference type="RefSeq" id="XP_006499125.1">
    <property type="nucleotide sequence ID" value="XM_006499062.3"/>
</dbReference>
<dbReference type="SMR" id="Q9R097"/>
<dbReference type="FunCoup" id="Q9R097">
    <property type="interactions" value="834"/>
</dbReference>
<dbReference type="STRING" id="10090.ENSMUSP00000106441"/>
<dbReference type="MEROPS" id="I02.007"/>
<dbReference type="MEROPS" id="I02.008"/>
<dbReference type="GlyCosmos" id="Q9R097">
    <property type="glycosylation" value="2 sites, No reported glycans"/>
</dbReference>
<dbReference type="GlyGen" id="Q9R097">
    <property type="glycosylation" value="3 sites, 1 N-linked glycan (1 site)"/>
</dbReference>
<dbReference type="iPTMnet" id="Q9R097"/>
<dbReference type="PhosphoSitePlus" id="Q9R097"/>
<dbReference type="CPTAC" id="non-CPTAC-3615"/>
<dbReference type="PaxDb" id="10090-ENSMUSP00000028783"/>
<dbReference type="PeptideAtlas" id="Q9R097"/>
<dbReference type="ProteomicsDB" id="258725"/>
<dbReference type="Antibodypedia" id="1540">
    <property type="antibodies" value="461 antibodies from 33 providers"/>
</dbReference>
<dbReference type="DNASU" id="20732"/>
<dbReference type="Ensembl" id="ENSMUST00000028783.14">
    <property type="protein sequence ID" value="ENSMUSP00000028783.8"/>
    <property type="gene ID" value="ENSMUSG00000027315.14"/>
</dbReference>
<dbReference type="Ensembl" id="ENSMUST00000110816.8">
    <property type="protein sequence ID" value="ENSMUSP00000106440.2"/>
    <property type="gene ID" value="ENSMUSG00000027315.14"/>
</dbReference>
<dbReference type="Ensembl" id="ENSMUST00000110817.3">
    <property type="protein sequence ID" value="ENSMUSP00000106441.3"/>
    <property type="gene ID" value="ENSMUSG00000027315.14"/>
</dbReference>
<dbReference type="GeneID" id="20732"/>
<dbReference type="KEGG" id="mmu:20732"/>
<dbReference type="UCSC" id="uc008ltk.1">
    <property type="organism name" value="mouse"/>
</dbReference>
<dbReference type="AGR" id="MGI:1338033"/>
<dbReference type="CTD" id="6692"/>
<dbReference type="MGI" id="MGI:1338033">
    <property type="gene designation" value="Spint1"/>
</dbReference>
<dbReference type="VEuPathDB" id="HostDB:ENSMUSG00000027315"/>
<dbReference type="eggNOG" id="KOG4295">
    <property type="taxonomic scope" value="Eukaryota"/>
</dbReference>
<dbReference type="GeneTree" id="ENSGT00940000161683"/>
<dbReference type="HOGENOM" id="CLU_032314_1_0_1"/>
<dbReference type="InParanoid" id="Q9R097"/>
<dbReference type="OMA" id="KGFHRHH"/>
<dbReference type="OrthoDB" id="2019384at2759"/>
<dbReference type="PhylomeDB" id="Q9R097"/>
<dbReference type="TreeFam" id="TF325867"/>
<dbReference type="Reactome" id="R-MMU-6806942">
    <property type="pathway name" value="MET Receptor Activation"/>
</dbReference>
<dbReference type="Reactome" id="R-MMU-8852405">
    <property type="pathway name" value="Signaling by MST1"/>
</dbReference>
<dbReference type="BioGRID-ORCS" id="20732">
    <property type="hits" value="2 hits in 75 CRISPR screens"/>
</dbReference>
<dbReference type="ChiTaRS" id="Spint1">
    <property type="organism name" value="mouse"/>
</dbReference>
<dbReference type="PRO" id="PR:Q9R097"/>
<dbReference type="Proteomes" id="UP000000589">
    <property type="component" value="Chromosome 2"/>
</dbReference>
<dbReference type="RNAct" id="Q9R097">
    <property type="molecule type" value="protein"/>
</dbReference>
<dbReference type="Bgee" id="ENSMUSG00000027315">
    <property type="expression patterns" value="Expressed in small intestine Peyer's patch and 164 other cell types or tissues"/>
</dbReference>
<dbReference type="GO" id="GO:0005737">
    <property type="term" value="C:cytoplasm"/>
    <property type="evidence" value="ECO:0007669"/>
    <property type="project" value="UniProtKB-SubCell"/>
</dbReference>
<dbReference type="GO" id="GO:0005576">
    <property type="term" value="C:extracellular region"/>
    <property type="evidence" value="ECO:0007669"/>
    <property type="project" value="UniProtKB-SubCell"/>
</dbReference>
<dbReference type="GO" id="GO:0005886">
    <property type="term" value="C:plasma membrane"/>
    <property type="evidence" value="ECO:0000314"/>
    <property type="project" value="MGI"/>
</dbReference>
<dbReference type="GO" id="GO:0004867">
    <property type="term" value="F:serine-type endopeptidase inhibitor activity"/>
    <property type="evidence" value="ECO:0000266"/>
    <property type="project" value="MGI"/>
</dbReference>
<dbReference type="GO" id="GO:0060670">
    <property type="term" value="P:branching involved in labyrinthine layer morphogenesis"/>
    <property type="evidence" value="ECO:0000315"/>
    <property type="project" value="MGI"/>
</dbReference>
<dbReference type="GO" id="GO:0071773">
    <property type="term" value="P:cellular response to BMP stimulus"/>
    <property type="evidence" value="ECO:0007669"/>
    <property type="project" value="Ensembl"/>
</dbReference>
<dbReference type="GO" id="GO:0001892">
    <property type="term" value="P:embryonic placenta development"/>
    <property type="evidence" value="ECO:0000315"/>
    <property type="project" value="MGI"/>
</dbReference>
<dbReference type="GO" id="GO:0030198">
    <property type="term" value="P:extracellular matrix organization"/>
    <property type="evidence" value="ECO:0000315"/>
    <property type="project" value="MGI"/>
</dbReference>
<dbReference type="GO" id="GO:2000178">
    <property type="term" value="P:negative regulation of neural precursor cell proliferation"/>
    <property type="evidence" value="ECO:0007669"/>
    <property type="project" value="Ensembl"/>
</dbReference>
<dbReference type="GO" id="GO:0001843">
    <property type="term" value="P:neural tube closure"/>
    <property type="evidence" value="ECO:0000316"/>
    <property type="project" value="MGI"/>
</dbReference>
<dbReference type="GO" id="GO:0060674">
    <property type="term" value="P:placenta blood vessel development"/>
    <property type="evidence" value="ECO:0000315"/>
    <property type="project" value="MGI"/>
</dbReference>
<dbReference type="GO" id="GO:0045687">
    <property type="term" value="P:positive regulation of glial cell differentiation"/>
    <property type="evidence" value="ECO:0007669"/>
    <property type="project" value="Ensembl"/>
</dbReference>
<dbReference type="GO" id="GO:0046718">
    <property type="term" value="P:symbiont entry into host cell"/>
    <property type="evidence" value="ECO:0000266"/>
    <property type="project" value="MGI"/>
</dbReference>
<dbReference type="CDD" id="cd22623">
    <property type="entry name" value="Kunitz_HAI1_1-like"/>
    <property type="match status" value="1"/>
</dbReference>
<dbReference type="CDD" id="cd22624">
    <property type="entry name" value="Kunitz_HAI1_2-like"/>
    <property type="match status" value="1"/>
</dbReference>
<dbReference type="CDD" id="cd00112">
    <property type="entry name" value="LDLa"/>
    <property type="match status" value="1"/>
</dbReference>
<dbReference type="FunFam" id="4.10.400.10:FF:000067">
    <property type="entry name" value="Serine peptidase inhibitor, Kunitz type 1"/>
    <property type="match status" value="1"/>
</dbReference>
<dbReference type="FunFam" id="4.10.410.10:FF:000006">
    <property type="entry name" value="Serine peptidase inhibitor, Kunitz type 1"/>
    <property type="match status" value="1"/>
</dbReference>
<dbReference type="FunFam" id="4.10.410.10:FF:000008">
    <property type="entry name" value="Serine peptidase inhibitor, Kunitz type 1"/>
    <property type="match status" value="1"/>
</dbReference>
<dbReference type="Gene3D" id="2.60.40.10">
    <property type="entry name" value="Immunoglobulins"/>
    <property type="match status" value="1"/>
</dbReference>
<dbReference type="Gene3D" id="4.10.400.10">
    <property type="entry name" value="Low-density Lipoprotein Receptor"/>
    <property type="match status" value="1"/>
</dbReference>
<dbReference type="Gene3D" id="4.10.410.10">
    <property type="entry name" value="Pancreatic trypsin inhibitor Kunitz domain"/>
    <property type="match status" value="2"/>
</dbReference>
<dbReference type="InterPro" id="IPR013783">
    <property type="entry name" value="Ig-like_fold"/>
</dbReference>
<dbReference type="InterPro" id="IPR002223">
    <property type="entry name" value="Kunitz_BPTI"/>
</dbReference>
<dbReference type="InterPro" id="IPR036880">
    <property type="entry name" value="Kunitz_BPTI_sf"/>
</dbReference>
<dbReference type="InterPro" id="IPR036055">
    <property type="entry name" value="LDL_receptor-like_sf"/>
</dbReference>
<dbReference type="InterPro" id="IPR023415">
    <property type="entry name" value="LDLR_class-A_CS"/>
</dbReference>
<dbReference type="InterPro" id="IPR002172">
    <property type="entry name" value="LDrepeatLR_classA_rpt"/>
</dbReference>
<dbReference type="InterPro" id="IPR013980">
    <property type="entry name" value="MANSC_dom"/>
</dbReference>
<dbReference type="InterPro" id="IPR011106">
    <property type="entry name" value="MANSC_N"/>
</dbReference>
<dbReference type="InterPro" id="IPR020901">
    <property type="entry name" value="Prtase_inh_Kunz-CS"/>
</dbReference>
<dbReference type="PANTHER" id="PTHR46750">
    <property type="entry name" value="KUNITZ-TYPE PROTEASE INHIBITOR 1"/>
    <property type="match status" value="1"/>
</dbReference>
<dbReference type="PANTHER" id="PTHR46750:SF1">
    <property type="entry name" value="KUNITZ-TYPE PROTEASE INHIBITOR 1"/>
    <property type="match status" value="1"/>
</dbReference>
<dbReference type="Pfam" id="PF22352">
    <property type="entry name" value="K319L-like_PKD"/>
    <property type="match status" value="1"/>
</dbReference>
<dbReference type="Pfam" id="PF00014">
    <property type="entry name" value="Kunitz_BPTI"/>
    <property type="match status" value="2"/>
</dbReference>
<dbReference type="Pfam" id="PF00057">
    <property type="entry name" value="Ldl_recept_a"/>
    <property type="match status" value="1"/>
</dbReference>
<dbReference type="Pfam" id="PF07502">
    <property type="entry name" value="MANEC"/>
    <property type="match status" value="1"/>
</dbReference>
<dbReference type="PRINTS" id="PR00759">
    <property type="entry name" value="BASICPTASE"/>
</dbReference>
<dbReference type="SMART" id="SM00131">
    <property type="entry name" value="KU"/>
    <property type="match status" value="2"/>
</dbReference>
<dbReference type="SMART" id="SM00192">
    <property type="entry name" value="LDLa"/>
    <property type="match status" value="1"/>
</dbReference>
<dbReference type="SMART" id="SM00765">
    <property type="entry name" value="MANEC"/>
    <property type="match status" value="1"/>
</dbReference>
<dbReference type="SUPFAM" id="SSF57362">
    <property type="entry name" value="BPTI-like"/>
    <property type="match status" value="2"/>
</dbReference>
<dbReference type="SUPFAM" id="SSF57424">
    <property type="entry name" value="LDL receptor-like module"/>
    <property type="match status" value="1"/>
</dbReference>
<dbReference type="PROSITE" id="PS00280">
    <property type="entry name" value="BPTI_KUNITZ_1"/>
    <property type="match status" value="2"/>
</dbReference>
<dbReference type="PROSITE" id="PS50279">
    <property type="entry name" value="BPTI_KUNITZ_2"/>
    <property type="match status" value="2"/>
</dbReference>
<dbReference type="PROSITE" id="PS01209">
    <property type="entry name" value="LDLRA_1"/>
    <property type="match status" value="1"/>
</dbReference>
<dbReference type="PROSITE" id="PS50068">
    <property type="entry name" value="LDLRA_2"/>
    <property type="match status" value="1"/>
</dbReference>
<dbReference type="PROSITE" id="PS50986">
    <property type="entry name" value="MANSC"/>
    <property type="match status" value="1"/>
</dbReference>
<organism>
    <name type="scientific">Mus musculus</name>
    <name type="common">Mouse</name>
    <dbReference type="NCBI Taxonomy" id="10090"/>
    <lineage>
        <taxon>Eukaryota</taxon>
        <taxon>Metazoa</taxon>
        <taxon>Chordata</taxon>
        <taxon>Craniata</taxon>
        <taxon>Vertebrata</taxon>
        <taxon>Euteleostomi</taxon>
        <taxon>Mammalia</taxon>
        <taxon>Eutheria</taxon>
        <taxon>Euarchontoglires</taxon>
        <taxon>Glires</taxon>
        <taxon>Rodentia</taxon>
        <taxon>Myomorpha</taxon>
        <taxon>Muroidea</taxon>
        <taxon>Muridae</taxon>
        <taxon>Murinae</taxon>
        <taxon>Mus</taxon>
        <taxon>Mus</taxon>
    </lineage>
</organism>
<reference key="1">
    <citation type="journal article" date="2001" name="Biochim. Biophys. Acta">
        <title>Mouse hepatocyte growth factor activator inhibitor type 1 (HAI-1) and type 2 (HAI-2)/placental bikunin genes and their promoters.</title>
        <authorList>
            <person name="Itoh H."/>
            <person name="Kataoka H."/>
            <person name="Meng J.Y."/>
            <person name="Hamasuna R."/>
            <person name="Kitamura N."/>
            <person name="Koono M."/>
        </authorList>
    </citation>
    <scope>NUCLEOTIDE SEQUENCE [MRNA]</scope>
    <source>
        <strain>BALB/cJ</strain>
    </source>
</reference>
<reference key="2">
    <citation type="journal article" date="2009" name="PLoS Biol.">
        <title>Lineage-specific biology revealed by a finished genome assembly of the mouse.</title>
        <authorList>
            <person name="Church D.M."/>
            <person name="Goodstadt L."/>
            <person name="Hillier L.W."/>
            <person name="Zody M.C."/>
            <person name="Goldstein S."/>
            <person name="She X."/>
            <person name="Bult C.J."/>
            <person name="Agarwala R."/>
            <person name="Cherry J.L."/>
            <person name="DiCuccio M."/>
            <person name="Hlavina W."/>
            <person name="Kapustin Y."/>
            <person name="Meric P."/>
            <person name="Maglott D."/>
            <person name="Birtle Z."/>
            <person name="Marques A.C."/>
            <person name="Graves T."/>
            <person name="Zhou S."/>
            <person name="Teague B."/>
            <person name="Potamousis K."/>
            <person name="Churas C."/>
            <person name="Place M."/>
            <person name="Herschleb J."/>
            <person name="Runnheim R."/>
            <person name="Forrest D."/>
            <person name="Amos-Landgraf J."/>
            <person name="Schwartz D.C."/>
            <person name="Cheng Z."/>
            <person name="Lindblad-Toh K."/>
            <person name="Eichler E.E."/>
            <person name="Ponting C.P."/>
        </authorList>
    </citation>
    <scope>NUCLEOTIDE SEQUENCE [LARGE SCALE GENOMIC DNA]</scope>
    <source>
        <strain>C57BL/6J</strain>
    </source>
</reference>
<reference key="3">
    <citation type="submission" date="2005-07" db="EMBL/GenBank/DDBJ databases">
        <authorList>
            <person name="Mural R.J."/>
            <person name="Adams M.D."/>
            <person name="Myers E.W."/>
            <person name="Smith H.O."/>
            <person name="Venter J.C."/>
        </authorList>
    </citation>
    <scope>NUCLEOTIDE SEQUENCE [LARGE SCALE GENOMIC DNA]</scope>
</reference>
<reference key="4">
    <citation type="journal article" date="2004" name="Genome Res.">
        <title>The status, quality, and expansion of the NIH full-length cDNA project: the Mammalian Gene Collection (MGC).</title>
        <authorList>
            <consortium name="The MGC Project Team"/>
        </authorList>
    </citation>
    <scope>NUCLEOTIDE SEQUENCE [LARGE SCALE MRNA]</scope>
    <source>
        <strain>129</strain>
        <tissue>Mammary tumor</tissue>
    </source>
</reference>
<reference key="5">
    <citation type="journal article" date="2009" name="Nat. Biotechnol.">
        <title>Mass-spectrometric identification and relative quantification of N-linked cell surface glycoproteins.</title>
        <authorList>
            <person name="Wollscheid B."/>
            <person name="Bausch-Fluck D."/>
            <person name="Henderson C."/>
            <person name="O'Brien R."/>
            <person name="Bibel M."/>
            <person name="Schiess R."/>
            <person name="Aebersold R."/>
            <person name="Watts J.D."/>
        </authorList>
    </citation>
    <scope>GLYCOSYLATION [LARGE SCALE ANALYSIS] AT ASN-229</scope>
</reference>